<organism>
    <name type="scientific">Streptococcus pneumoniae (strain P1031)</name>
    <dbReference type="NCBI Taxonomy" id="488223"/>
    <lineage>
        <taxon>Bacteria</taxon>
        <taxon>Bacillati</taxon>
        <taxon>Bacillota</taxon>
        <taxon>Bacilli</taxon>
        <taxon>Lactobacillales</taxon>
        <taxon>Streptococcaceae</taxon>
        <taxon>Streptococcus</taxon>
    </lineage>
</organism>
<accession>C1CK08</accession>
<gene>
    <name evidence="1" type="primary">aguA</name>
    <name type="ordered locus">SPP_0929</name>
</gene>
<name>AGUA_STRZP</name>
<proteinExistence type="inferred from homology"/>
<protein>
    <recommendedName>
        <fullName evidence="1">Putative agmatine deiminase</fullName>
        <ecNumber evidence="1">3.5.3.12</ecNumber>
    </recommendedName>
    <alternativeName>
        <fullName evidence="1">Agmatine iminohydrolase</fullName>
    </alternativeName>
</protein>
<reference key="1">
    <citation type="journal article" date="2010" name="Genome Biol.">
        <title>Structure and dynamics of the pan-genome of Streptococcus pneumoniae and closely related species.</title>
        <authorList>
            <person name="Donati C."/>
            <person name="Hiller N.L."/>
            <person name="Tettelin H."/>
            <person name="Muzzi A."/>
            <person name="Croucher N.J."/>
            <person name="Angiuoli S.V."/>
            <person name="Oggioni M."/>
            <person name="Dunning Hotopp J.C."/>
            <person name="Hu F.Z."/>
            <person name="Riley D.R."/>
            <person name="Covacci A."/>
            <person name="Mitchell T.J."/>
            <person name="Bentley S.D."/>
            <person name="Kilian M."/>
            <person name="Ehrlich G.D."/>
            <person name="Rappuoli R."/>
            <person name="Moxon E.R."/>
            <person name="Masignani V."/>
        </authorList>
    </citation>
    <scope>NUCLEOTIDE SEQUENCE [LARGE SCALE GENOMIC DNA]</scope>
    <source>
        <strain>P1031</strain>
    </source>
</reference>
<feature type="chain" id="PRO_1000188420" description="Putative agmatine deiminase">
    <location>
        <begin position="1"/>
        <end position="361"/>
    </location>
</feature>
<feature type="active site" description="Amidino-cysteine intermediate" evidence="1">
    <location>
        <position position="354"/>
    </location>
</feature>
<keyword id="KW-0378">Hydrolase</keyword>
<comment type="catalytic activity">
    <reaction evidence="1">
        <text>agmatine + H2O = N-carbamoylputrescine + NH4(+)</text>
        <dbReference type="Rhea" id="RHEA:18037"/>
        <dbReference type="ChEBI" id="CHEBI:15377"/>
        <dbReference type="ChEBI" id="CHEBI:28938"/>
        <dbReference type="ChEBI" id="CHEBI:58145"/>
        <dbReference type="ChEBI" id="CHEBI:58318"/>
        <dbReference type="EC" id="3.5.3.12"/>
    </reaction>
</comment>
<comment type="similarity">
    <text evidence="1">Belongs to the agmatine deiminase family.</text>
</comment>
<sequence>MMDSPKKLGYHMPAEYEPHHGTLMIWPTRPGSWPFQGKAAKRAFTQIIETIAEGERVYLLVEQAYLSEAQSYLGDKVVYLDIPTNDAWARDTGPTILVNDKGKKLAVDWAFNAWGGTYDGLYQDYEEDDQVASRFAEALGRPVYDAKPFVLEGGAIHSDGQGTILVTESCLLSPGRNPNLTKEEIENTLLESLGAEKVIWLPYGIYQDETNEHVDNVAAFVGPAELVLAWTDDENDPQYAMSKADLELLEQETDAKGCHFTIHKLPIPAVRQVVTEEDLPGYIYEEGEEKRYAGERLAASYVNFYIANKAVLVPQFEDVNDQVALDILSKCFPDRKVVGIPARDILLGGGNIHCITQQIPE</sequence>
<evidence type="ECO:0000255" key="1">
    <source>
        <dbReference type="HAMAP-Rule" id="MF_01841"/>
    </source>
</evidence>
<dbReference type="EC" id="3.5.3.12" evidence="1"/>
<dbReference type="EMBL" id="CP000920">
    <property type="protein sequence ID" value="ACO20603.1"/>
    <property type="molecule type" value="Genomic_DNA"/>
</dbReference>
<dbReference type="RefSeq" id="WP_000969456.1">
    <property type="nucleotide sequence ID" value="NC_012467.1"/>
</dbReference>
<dbReference type="SMR" id="C1CK08"/>
<dbReference type="GeneID" id="45653733"/>
<dbReference type="KEGG" id="spp:SPP_0929"/>
<dbReference type="HOGENOM" id="CLU_037682_1_0_9"/>
<dbReference type="GO" id="GO:0047632">
    <property type="term" value="F:agmatine deiminase activity"/>
    <property type="evidence" value="ECO:0007669"/>
    <property type="project" value="UniProtKB-UniRule"/>
</dbReference>
<dbReference type="GO" id="GO:0004668">
    <property type="term" value="F:protein-arginine deiminase activity"/>
    <property type="evidence" value="ECO:0007669"/>
    <property type="project" value="InterPro"/>
</dbReference>
<dbReference type="GO" id="GO:0009446">
    <property type="term" value="P:putrescine biosynthetic process"/>
    <property type="evidence" value="ECO:0007669"/>
    <property type="project" value="InterPro"/>
</dbReference>
<dbReference type="Gene3D" id="3.75.10.10">
    <property type="entry name" value="L-arginine/glycine Amidinotransferase, Chain A"/>
    <property type="match status" value="1"/>
</dbReference>
<dbReference type="HAMAP" id="MF_01841">
    <property type="entry name" value="Agmatine_deimin"/>
    <property type="match status" value="1"/>
</dbReference>
<dbReference type="InterPro" id="IPR017754">
    <property type="entry name" value="Agmatine_deiminase"/>
</dbReference>
<dbReference type="InterPro" id="IPR007466">
    <property type="entry name" value="Peptidyl-Arg-deiminase_porph"/>
</dbReference>
<dbReference type="NCBIfam" id="TIGR03380">
    <property type="entry name" value="agmatine_aguA"/>
    <property type="match status" value="1"/>
</dbReference>
<dbReference type="NCBIfam" id="NF010070">
    <property type="entry name" value="PRK13551.1"/>
    <property type="match status" value="1"/>
</dbReference>
<dbReference type="PANTHER" id="PTHR31377">
    <property type="entry name" value="AGMATINE DEIMINASE-RELATED"/>
    <property type="match status" value="1"/>
</dbReference>
<dbReference type="PANTHER" id="PTHR31377:SF0">
    <property type="entry name" value="AGMATINE DEIMINASE-RELATED"/>
    <property type="match status" value="1"/>
</dbReference>
<dbReference type="Pfam" id="PF04371">
    <property type="entry name" value="PAD_porph"/>
    <property type="match status" value="1"/>
</dbReference>
<dbReference type="SUPFAM" id="SSF55909">
    <property type="entry name" value="Pentein"/>
    <property type="match status" value="1"/>
</dbReference>